<feature type="chain" id="PRO_0000046740" description="DNA primase small subunit PriS">
    <location>
        <begin position="1"/>
        <end position="391"/>
    </location>
</feature>
<feature type="active site" evidence="1">
    <location>
        <position position="98"/>
    </location>
</feature>
<feature type="active site" evidence="1">
    <location>
        <position position="100"/>
    </location>
</feature>
<feature type="active site" evidence="1">
    <location>
        <position position="294"/>
    </location>
</feature>
<name>PRIS_HALSA</name>
<comment type="function">
    <text evidence="1">Catalytic subunit of DNA primase, an RNA polymerase that catalyzes the synthesis of short RNA molecules used as primers for DNA polymerase during DNA replication. The small subunit contains the primase catalytic core and has DNA synthesis activity on its own. Binding to the large subunit stabilizes and modulates the activity, increasing the rate of DNA synthesis while decreasing the length of the DNA fragments, and conferring RNA synthesis capability. The DNA polymerase activity may enable DNA primase to also catalyze primer extension after primer synthesis. May also play a role in DNA repair.</text>
</comment>
<comment type="cofactor">
    <cofactor evidence="1">
        <name>Mg(2+)</name>
        <dbReference type="ChEBI" id="CHEBI:18420"/>
    </cofactor>
    <cofactor evidence="1">
        <name>Mn(2+)</name>
        <dbReference type="ChEBI" id="CHEBI:29035"/>
    </cofactor>
</comment>
<comment type="subunit">
    <text evidence="1">Heterodimer of a small subunit (PriS) and a large subunit (PriL).</text>
</comment>
<comment type="similarity">
    <text evidence="1">Belongs to the eukaryotic-type primase small subunit family.</text>
</comment>
<comment type="sequence caution" evidence="2">
    <conflict type="erroneous initiation">
        <sequence resource="EMBL-CDS" id="AAG19774"/>
    </conflict>
    <text>Extended N-terminus.</text>
</comment>
<keyword id="KW-0235">DNA replication</keyword>
<keyword id="KW-0240">DNA-directed RNA polymerase</keyword>
<keyword id="KW-0460">Magnesium</keyword>
<keyword id="KW-0464">Manganese</keyword>
<keyword id="KW-0479">Metal-binding</keyword>
<keyword id="KW-0548">Nucleotidyltransferase</keyword>
<keyword id="KW-0639">Primosome</keyword>
<keyword id="KW-1185">Reference proteome</keyword>
<keyword id="KW-0804">Transcription</keyword>
<keyword id="KW-0808">Transferase</keyword>
<organism>
    <name type="scientific">Halobacterium salinarum (strain ATCC 700922 / JCM 11081 / NRC-1)</name>
    <name type="common">Halobacterium halobium</name>
    <dbReference type="NCBI Taxonomy" id="64091"/>
    <lineage>
        <taxon>Archaea</taxon>
        <taxon>Methanobacteriati</taxon>
        <taxon>Methanobacteriota</taxon>
        <taxon>Stenosarchaea group</taxon>
        <taxon>Halobacteria</taxon>
        <taxon>Halobacteriales</taxon>
        <taxon>Halobacteriaceae</taxon>
        <taxon>Halobacterium</taxon>
        <taxon>Halobacterium salinarum NRC-34001</taxon>
    </lineage>
</organism>
<proteinExistence type="inferred from homology"/>
<accession>Q9HPU3</accession>
<gene>
    <name evidence="1" type="primary">priS</name>
    <name type="synonym">pri1</name>
    <name type="synonym">priA</name>
    <name type="ordered locus">VNG_1470G</name>
</gene>
<reference key="1">
    <citation type="journal article" date="2000" name="Proc. Natl. Acad. Sci. U.S.A.">
        <title>Genome sequence of Halobacterium species NRC-1.</title>
        <authorList>
            <person name="Ng W.V."/>
            <person name="Kennedy S.P."/>
            <person name="Mahairas G.G."/>
            <person name="Berquist B."/>
            <person name="Pan M."/>
            <person name="Shukla H.D."/>
            <person name="Lasky S.R."/>
            <person name="Baliga N.S."/>
            <person name="Thorsson V."/>
            <person name="Sbrogna J."/>
            <person name="Swartzell S."/>
            <person name="Weir D."/>
            <person name="Hall J."/>
            <person name="Dahl T.A."/>
            <person name="Welti R."/>
            <person name="Goo Y.A."/>
            <person name="Leithauser B."/>
            <person name="Keller K."/>
            <person name="Cruz R."/>
            <person name="Danson M.J."/>
            <person name="Hough D.W."/>
            <person name="Maddocks D.G."/>
            <person name="Jablonski P.E."/>
            <person name="Krebs M.P."/>
            <person name="Angevine C.M."/>
            <person name="Dale H."/>
            <person name="Isenbarger T.A."/>
            <person name="Peck R.F."/>
            <person name="Pohlschroder M."/>
            <person name="Spudich J.L."/>
            <person name="Jung K.-H."/>
            <person name="Alam M."/>
            <person name="Freitas T."/>
            <person name="Hou S."/>
            <person name="Daniels C.J."/>
            <person name="Dennis P.P."/>
            <person name="Omer A.D."/>
            <person name="Ebhardt H."/>
            <person name="Lowe T.M."/>
            <person name="Liang P."/>
            <person name="Riley M."/>
            <person name="Hood L."/>
            <person name="DasSarma S."/>
        </authorList>
    </citation>
    <scope>NUCLEOTIDE SEQUENCE [LARGE SCALE GENOMIC DNA]</scope>
    <source>
        <strain>ATCC 700922 / JCM 11081 / NRC-1</strain>
    </source>
</reference>
<protein>
    <recommendedName>
        <fullName evidence="1">DNA primase small subunit PriS</fullName>
        <ecNumber evidence="1">2.7.7.-</ecNumber>
    </recommendedName>
</protein>
<evidence type="ECO:0000255" key="1">
    <source>
        <dbReference type="HAMAP-Rule" id="MF_00700"/>
    </source>
</evidence>
<evidence type="ECO:0000305" key="2"/>
<dbReference type="EC" id="2.7.7.-" evidence="1"/>
<dbReference type="EMBL" id="AE004437">
    <property type="protein sequence ID" value="AAG19774.1"/>
    <property type="status" value="ALT_INIT"/>
    <property type="molecule type" value="Genomic_DNA"/>
</dbReference>
<dbReference type="PIR" id="B84301">
    <property type="entry name" value="B84301"/>
</dbReference>
<dbReference type="RefSeq" id="WP_012289337.1">
    <property type="nucleotide sequence ID" value="NC_002607.1"/>
</dbReference>
<dbReference type="SMR" id="Q9HPU3"/>
<dbReference type="FunCoup" id="Q9HPU3">
    <property type="interactions" value="10"/>
</dbReference>
<dbReference type="STRING" id="64091.VNG_1470G"/>
<dbReference type="PaxDb" id="64091-VNG_1470G"/>
<dbReference type="GeneID" id="68694182"/>
<dbReference type="KEGG" id="hal:VNG_1470G"/>
<dbReference type="PATRIC" id="fig|64091.14.peg.1124"/>
<dbReference type="HOGENOM" id="CLU_056123_1_0_2"/>
<dbReference type="InParanoid" id="Q9HPU3"/>
<dbReference type="OrthoDB" id="31125at2157"/>
<dbReference type="PhylomeDB" id="Q9HPU3"/>
<dbReference type="Proteomes" id="UP000000554">
    <property type="component" value="Chromosome"/>
</dbReference>
<dbReference type="GO" id="GO:0000428">
    <property type="term" value="C:DNA-directed RNA polymerase complex"/>
    <property type="evidence" value="ECO:0007669"/>
    <property type="project" value="UniProtKB-KW"/>
</dbReference>
<dbReference type="GO" id="GO:1990077">
    <property type="term" value="C:primosome complex"/>
    <property type="evidence" value="ECO:0007669"/>
    <property type="project" value="UniProtKB-KW"/>
</dbReference>
<dbReference type="GO" id="GO:0003899">
    <property type="term" value="F:DNA-directed RNA polymerase activity"/>
    <property type="evidence" value="ECO:0007669"/>
    <property type="project" value="InterPro"/>
</dbReference>
<dbReference type="GO" id="GO:0046872">
    <property type="term" value="F:metal ion binding"/>
    <property type="evidence" value="ECO:0007669"/>
    <property type="project" value="UniProtKB-KW"/>
</dbReference>
<dbReference type="GO" id="GO:0006269">
    <property type="term" value="P:DNA replication, synthesis of primer"/>
    <property type="evidence" value="ECO:0000318"/>
    <property type="project" value="GO_Central"/>
</dbReference>
<dbReference type="CDD" id="cd04860">
    <property type="entry name" value="AE_Prim_S"/>
    <property type="match status" value="1"/>
</dbReference>
<dbReference type="Gene3D" id="3.90.920.10">
    <property type="entry name" value="DNA primase, PRIM domain"/>
    <property type="match status" value="1"/>
</dbReference>
<dbReference type="HAMAP" id="MF_00700">
    <property type="entry name" value="DNA_primase_sml_arc"/>
    <property type="match status" value="1"/>
</dbReference>
<dbReference type="InterPro" id="IPR002755">
    <property type="entry name" value="DNA_primase_S"/>
</dbReference>
<dbReference type="InterPro" id="IPR014052">
    <property type="entry name" value="DNA_primase_ssu_euk/arc"/>
</dbReference>
<dbReference type="InterPro" id="IPR023639">
    <property type="entry name" value="DNA_primase_ssu_PriS"/>
</dbReference>
<dbReference type="NCBIfam" id="TIGR00335">
    <property type="entry name" value="primase_sml"/>
    <property type="match status" value="1"/>
</dbReference>
<dbReference type="NCBIfam" id="NF001639">
    <property type="entry name" value="PRK00419.1-1"/>
    <property type="match status" value="1"/>
</dbReference>
<dbReference type="PANTHER" id="PTHR10536">
    <property type="entry name" value="DNA PRIMASE SMALL SUBUNIT"/>
    <property type="match status" value="1"/>
</dbReference>
<dbReference type="Pfam" id="PF01896">
    <property type="entry name" value="DNA_primase_S"/>
    <property type="match status" value="1"/>
</dbReference>
<dbReference type="SUPFAM" id="SSF56747">
    <property type="entry name" value="Prim-pol domain"/>
    <property type="match status" value="1"/>
</dbReference>
<sequence length="391" mass="43350">MEERTRAYLRGRFGDVYRRAEIDLPPRADDREWGYIPWTAGPDTTMVRHKSTLDLGSMTSFLERKCPRHVYFSAGTYDAPGAATMDEKHWQGSDLVFDLDADHLPRVTLGEDSYAEMLSKCKDALLRLLDFLERDFGFEELTVTFSGGRGYHVHVRDAGVYELGSEERREIVDYVRGNDLALETLVEAEPVGGRGLENPTEKRMLPADGGWGRRVTTRLEAFADDLIERGEDDAVATLTEFDGVGERSARAIYNVVADNTTAVKRGNVDVHPAFLTVARRYIDETVAAEQAPIDEPVTTDTNRLIRLPGSLHGGSGLEVQRLDRAALDDFDPLVDAVPETFVGHDITVELPTEHTVELRGESLTVGPGVSTVPEYAGVFMMARGTAEKATE</sequence>